<name>FRYL_HUMAN</name>
<gene>
    <name type="primary">FRYL</name>
    <name type="synonym">AF4P12</name>
    <name type="synonym">KIAA0826</name>
</gene>
<comment type="function">
    <text evidence="1 3">Plays a key role in maintaining the integrity of polarized cell extensions during morphogenesis, regulates the actin cytoskeleton and plays a key role in patterning sensory neuron dendritic fields by promoting avoidance between homologous dendrites as well as by limiting dendritic branching (By similarity). May function as a transcriptional activator.</text>
</comment>
<comment type="interaction">
    <interactant intactId="EBI-1104821">
        <id>O94915</id>
    </interactant>
    <interactant intactId="EBI-748420">
        <id>Q9NSC5</id>
        <label>HOMER3</label>
    </interactant>
    <organismsDiffer>false</organismsDiffer>
    <experiments>3</experiments>
</comment>
<comment type="interaction">
    <interactant intactId="EBI-12023420">
        <id>O94915-2</id>
    </interactant>
    <interactant intactId="EBI-748420">
        <id>Q9NSC5</id>
        <label>HOMER3</label>
    </interactant>
    <organismsDiffer>false</organismsDiffer>
    <experiments>3</experiments>
</comment>
<comment type="interaction">
    <interactant intactId="EBI-12023420">
        <id>O94915-2</id>
    </interactant>
    <interactant intactId="EBI-14086479">
        <id>Q8IVT4</id>
        <label>MGC50722</label>
    </interactant>
    <organismsDiffer>false</organismsDiffer>
    <experiments>3</experiments>
</comment>
<comment type="interaction">
    <interactant intactId="EBI-12023420">
        <id>O94915-2</id>
    </interactant>
    <interactant intactId="EBI-740195">
        <id>Q9BUL8</id>
        <label>PDCD10</label>
    </interactant>
    <organismsDiffer>false</organismsDiffer>
    <experiments>3</experiments>
</comment>
<comment type="interaction">
    <interactant intactId="EBI-12023420">
        <id>O94915-2</id>
    </interactant>
    <interactant intactId="EBI-11986293">
        <id>P0CG20</id>
        <label>PRR35</label>
    </interactant>
    <organismsDiffer>false</organismsDiffer>
    <experiments>3</experiments>
</comment>
<comment type="alternative products">
    <event type="alternative splicing"/>
    <isoform>
        <id>O94915-1</id>
        <name>1</name>
        <sequence type="displayed"/>
    </isoform>
    <isoform>
        <id>O94915-2</id>
        <name>2</name>
        <sequence type="described" ref="VSP_023038 VSP_023039"/>
    </isoform>
</comment>
<comment type="tissue specificity">
    <text evidence="3">Widely expressed with higher expression in colon, placenta, brain and cells of lymphoid origin.</text>
</comment>
<comment type="disease" evidence="5">
    <disease id="DI-06978">
        <name>Pan-Chung-Bellen syndrome</name>
        <acronym>PCBS</acronym>
        <description>An autosomal dominant disorder characterized by developmental delay, intellectual disability, dysmorphic features, and congenital anomalies in cardiovascular, skeletal, gastrointestinal, renal, and urogenital systems.</description>
        <dbReference type="MIM" id="621049"/>
    </disease>
    <text>The disease is caused by variants affecting the gene represented in this entry.</text>
</comment>
<comment type="disease">
    <text evidence="3">A chromosomal aberration involving FRYL is found in treatment-related acute lymphoblastic leukemia (ALL). Translocation t(4;11)(p12;q23) that forms a KMT2A/MLL1-FRYL fusion protein.</text>
</comment>
<comment type="similarity">
    <text evidence="8">Belongs to the furry protein family.</text>
</comment>
<comment type="online information" name="Atlas of Genetics and Cytogenetics in Oncology and Haematology">
    <link uri="https://atlasgeneticsoncology.org/gene/42970/AF4q12"/>
</comment>
<feature type="initiator methionine" description="Removed" evidence="6">
    <location>
        <position position="1"/>
    </location>
</feature>
<feature type="chain" id="PRO_0000277619" description="Protein furry homolog-like">
    <location>
        <begin position="2"/>
        <end position="3013"/>
    </location>
</feature>
<feature type="region of interest" description="Disordered" evidence="2">
    <location>
        <begin position="90"/>
        <end position="109"/>
    </location>
</feature>
<feature type="region of interest" description="Disordered" evidence="2">
    <location>
        <begin position="878"/>
        <end position="897"/>
    </location>
</feature>
<feature type="region of interest" description="Disordered" evidence="2">
    <location>
        <begin position="1476"/>
        <end position="1498"/>
    </location>
</feature>
<feature type="region of interest" description="Disordered" evidence="2">
    <location>
        <begin position="2459"/>
        <end position="2492"/>
    </location>
</feature>
<feature type="region of interest" description="Disordered" evidence="2">
    <location>
        <begin position="2508"/>
        <end position="2567"/>
    </location>
</feature>
<feature type="region of interest" description="Disordered" evidence="2">
    <location>
        <begin position="2636"/>
        <end position="2660"/>
    </location>
</feature>
<feature type="compositionally biased region" description="Low complexity" evidence="2">
    <location>
        <begin position="1476"/>
        <end position="1486"/>
    </location>
</feature>
<feature type="compositionally biased region" description="Polar residues" evidence="2">
    <location>
        <begin position="2464"/>
        <end position="2483"/>
    </location>
</feature>
<feature type="compositionally biased region" description="Polar residues" evidence="2">
    <location>
        <begin position="2528"/>
        <end position="2539"/>
    </location>
</feature>
<feature type="compositionally biased region" description="Polar residues" evidence="2">
    <location>
        <begin position="2555"/>
        <end position="2567"/>
    </location>
</feature>
<feature type="site" description="Breakpoint for insertion to form KMT2A/MLL1-AFF4 fusion protein">
    <location>
        <position position="2302"/>
    </location>
</feature>
<feature type="modified residue" description="N-acetylserine" evidence="6">
    <location>
        <position position="2"/>
    </location>
</feature>
<feature type="modified residue" description="Phosphoserine" evidence="10 11 13 14">
    <location>
        <position position="844"/>
    </location>
</feature>
<feature type="modified residue" description="Phosphoserine" evidence="12">
    <location>
        <position position="1914"/>
    </location>
</feature>
<feature type="modified residue" description="Phosphoserine" evidence="12">
    <location>
        <position position="1935"/>
    </location>
</feature>
<feature type="modified residue" description="Phosphoserine" evidence="14">
    <location>
        <position position="1941"/>
    </location>
</feature>
<feature type="modified residue" description="Phosphoserine" evidence="14">
    <location>
        <position position="1945"/>
    </location>
</feature>
<feature type="modified residue" description="Phosphoserine" evidence="14">
    <location>
        <position position="1957"/>
    </location>
</feature>
<feature type="modified residue" description="Phosphothreonine" evidence="10 14">
    <location>
        <position position="1959"/>
    </location>
</feature>
<feature type="modified residue" description="Phosphoserine" evidence="14">
    <location>
        <position position="1978"/>
    </location>
</feature>
<feature type="modified residue" description="Phosphoserine" evidence="9 10 12 14">
    <location>
        <position position="2272"/>
    </location>
</feature>
<feature type="modified residue" description="Phosphoserine" evidence="15">
    <location>
        <position position="2454"/>
    </location>
</feature>
<feature type="modified residue" description="Phosphoserine" evidence="15">
    <location>
        <position position="2499"/>
    </location>
</feature>
<feature type="splice variant" id="VSP_023038" description="In isoform 2." evidence="7">
    <location>
        <begin position="1"/>
        <end position="2604"/>
    </location>
</feature>
<feature type="splice variant" id="VSP_023039" description="In isoform 2." evidence="7">
    <location>
        <begin position="2822"/>
        <end position="2827"/>
    </location>
</feature>
<feature type="sequence variant" id="VAR_090232" description="In PCBS; uncertain significance; dbSNP:rs1750187072." evidence="5">
    <original>R</original>
    <variation>C</variation>
    <location>
        <position position="110"/>
    </location>
</feature>
<feature type="sequence variant" id="VAR_066994" description="In dbSNP:rs376571442." evidence="4">
    <original>P</original>
    <variation>S</variation>
    <location>
        <position position="890"/>
    </location>
</feature>
<feature type="sequence variant" id="VAR_090233" description="In PCBS; likely pathogenic." evidence="5">
    <location>
        <begin position="1555"/>
        <end position="3013"/>
    </location>
</feature>
<feature type="sequence variant" id="VAR_090234" description="In PCBS; uncertain significance; dbSNP:rs756560685." evidence="5">
    <original>F</original>
    <variation>L</variation>
    <location>
        <position position="1628"/>
    </location>
</feature>
<feature type="sequence variant" id="VAR_053832" description="In dbSNP:rs7670111.">
    <original>I</original>
    <variation>V</variation>
    <location>
        <position position="1878"/>
    </location>
</feature>
<feature type="sequence variant" id="VAR_090235" description="In PCBS; uncertain significance." evidence="5">
    <original>F</original>
    <variation>S</variation>
    <location>
        <position position="2295"/>
    </location>
</feature>
<feature type="sequence variant" id="VAR_090236" description="In PCBS; uncertain significance; dbSNP:rs1483168578." evidence="5">
    <original>S</original>
    <variation>I</variation>
    <location>
        <position position="2397"/>
    </location>
</feature>
<feature type="sequence variant" id="VAR_090237" description="In PCBS; uncertain significance; dbSNP:rs1227658189." evidence="5">
    <original>Y</original>
    <variation>C</variation>
    <location>
        <position position="2951"/>
    </location>
</feature>
<sequence length="3013" mass="339598">MSNITIDPDVKPGEYVIKSLFAEFAVQAEKKIEVVMAEPLEKLLSRSLQRGEDLQFDQLISSMSSVAEHCLPSLLRTLFDWYRRQNGTEDESYEYRPRSSTKSKGDEQQRERDYLLERRDLAVDFIFCLVLVEVLKQIPVHPVPDPLVHEVLNLAFKHFKHKEGYSGTNTGNVHIIADLYAEVIGVLAQSKFQAVRKKFVTELKELRQKEQSPHVVQSVISLIMGMKFFRVKMYPVEDFEASFQFMQECAQYFLEVKDKDIKHALAGLFVEILIPVAAAVKNEVNVPCLKNFVEMLYQTTFELSSRKKHSLALYPLITCLLCVSQKQFFLNNWHIFLQNCLSHLKNKDPKMSRVALESLYRLLWVYVIRIKCESNTVTQSRLMSIVSALFPKGSRSVVPRDTPLNIFVKIIQFIAQERLDFAMKEIIFDLLSVGKSTKTFTINPERMNIGLRVFLVIADSLQQKDGEPPMPTTGVILPSGNTLRVKKIFLNKTLTDEEAKVIGMSVYYPQVRKALDSILRHLDKEVGRPMCMTSVQMSNKEPEDMITGERKPKIDLFRTCIAAIPRLIPDGMSRTDLIELLARLTIHMDEELRALAFNTLQALMLDFPDWREDVLSGFVYFIVREVTDVHPTLLDNAVKMLVQLINQWKQAAQMHNKNQDTQHGVANGASHPPPLERSPYSNVFHVVEGFALVILCSSRPATRRLAVSVLREIRALFALLEIPKGDDELAIDVMDRLSPSILESFIHLTGADQTTLLYCPSSIDLQTLAEWNSSPISHQFDVISPSHIWIFAHVTQGQDPWIISLSSFLKQENLPKHCSTAVSYAWMFAYTRLQLLSPQVDINSPINAKKVNTTTSSDSYIGLWRNYLILCCSAATSSSSTSAGSVRCSPPETLASTPDSGYSIDSKIIGIPSPSSLFKHIVPMMRSESMEITESLVLGLGRTNPGAFRELIEELHPIIKEALERRPENMKRRRRRDILRVQLVRIFELLADAGVISHSASGGLDNETHFLNNTLLEYVDLTRQLLEAENEKDSDTLKDIRCHFSALVANIIQNVPVHQRRSIFPQQSLRHSLFMLFSHWAGPFSIMFTPLDRYSDRNMQINRHQYCALKAMSAVLCCGPVADNVGLSSDGYLYKWLDNILDSLDKKVHQLGCEAVTLLLELNPDQSNLMYWAVDRCYTGSGRVAAGCFKAIANVFQNRDYQCDTVMLLNLILFKAADSSRSIYEVAMQLLQILEPKMFRYAHKLEVQRTDGVLSQLSPLPHLYSVSYYQLSEELARAYPELTLAIFSEISQRIQTAHPAGRQVMLHYLLPWMNNIELVDLKPLPTARRHDEDEDDSLKDRELMVTSRRWLRGEGWGSPQATAMVLNNLMYMTAKYGDELAWSEVENVWTTLADGWPKNLKIILHFLISICGVNSEPSLLPYVKKVIVYLGRDKTMQLLEELVSELQLTDPVSSGVTHMDNPPYYRITSSYKIPSVTSGTTSSSNTMVAPTDGNPDNKPIKENIEESYVHLDIYSGLNSHLNRQHHRLESRYSSSSGGSYEEEKSDSMPLYSNWRLKVMEHNQGEPLPFPPAGGCWSPLVDYVPETSSPGLPLHRCNIAVILLTDLIIDHSVKVEWGSYLHLLLHAIFIGFDHCHPEVYEHCKRLLLHLLIVMGPNSNIRTVASVLLRNKEFNEPRVLTVKQVAHLDYNFTAGINDFIPDYQPSPMTDSGLSSSSTSSSISLGNNSAAISHLHTTILNEVDISVEQDGKVKTLMEFITSRKRGPLWNHEDVSAKNPSIKSAEQLTTFLKHVVSVFKQSSSEGIHLEHHLSEVALQTALSCSSRHYAGRSFQIFRALKQPLTATTLSDVLSRLVETVGDPGEDAQGFVIELLLTLESAIDTLAETMKHYDLLSALSQTSYHDPIMGNKYAANRKSTGQLNLSTSPINSSSYLGYNSNARSNSLRLSLIGDRRGDRRRSNTLDIMDGRINHSSSLARTRSLSSLREKGMYDVQSTTEPTNLMATIFWIAASLLESDYEYEYLLALRLLNKLLIHLPLDKSESREKIENVQSKLKWTNFPGLQQLFLKGFTSASTQEMTVHLLSKLISVSKHTLVDPSQLSGFPLNILCLLPHLIQHFDSPTQFCKETASRIAKVCAEEKCPTLVNLAHMMSLYSTHTYSRDCSNWINVVCRYLHDSFSDTTFNLVTYLAELLEKGLSSMQQSLLQIIYSLLSHIDLSAAPAKQFNLEIIKIIGKYVQSPYWKEALNILKLVVSRSASLVVPSDIPKTYGGDTGSPEISFTKIFNNVSKELPGKTLDFHFDISETPIIGNKYGDQHSAAGRNGKPKVIAVTRSTSSTSSGSNSNALVPVSWKRPQLSQRRTREKLMNVLSLCGPESGLPKNPSVVFSSNEDLEVGDQQTSLISTTEDINQEEEVAVEDNSSEQQFGVFKDFDFLDVELEDAEGESMDNFNWGVRRRSLDSIDKGDTPSLQEYQCSSSTPSLNLTNQEDTDESSEEEAALTASQILSRTQMLNSDSATDETIPDHPDLLLQSEDSTGSITTEEVLQIRDETPTLEASLDNANSRLPEDTTSVLKEEHVTTFEDEGSYIIQEQQESLVCQGILDLEETEMPEPLAPESYPESVCEEDVTLALKELDERCEEEEADFSGLSSQDEEEQDGFPEVQTSPLPSPFLSAIIAAFQPVAYDDEEEAWRCHVNQMLSDTDGSSAVFTFHVFSRLFQTIQRKFGEITNEAVSFLGDSLQRIGTKFKSSLEVMMLCSECPTVFVDAETLMSCGLLETLKFGVLELQEHLDTYNVKREAAEQWLDDCKRTFGAKEDMYRINTDAQQMEILAELELCRRLYKLHFQLLLLFQAYCKLINQVNTIKNEAEVINMSEELAQLESILKEAESASENEEIDISKAAQTTIETAIHSLIETLKNKEFISAVAQVKAFRSLWPSDIFGSCEDDPVQTLLHIYFHHQTLGQTGSFAVIGSNLDMSEANYKLMELNLEIRESLRMVQSYQLLAQAKPMGNMVSTGF</sequence>
<keyword id="KW-0007">Acetylation</keyword>
<keyword id="KW-0025">Alternative splicing</keyword>
<keyword id="KW-0160">Chromosomal rearrangement</keyword>
<keyword id="KW-0903">Direct protein sequencing</keyword>
<keyword id="KW-0225">Disease variant</keyword>
<keyword id="KW-0991">Intellectual disability</keyword>
<keyword id="KW-0597">Phosphoprotein</keyword>
<keyword id="KW-1267">Proteomics identification</keyword>
<keyword id="KW-1185">Reference proteome</keyword>
<keyword id="KW-0804">Transcription</keyword>
<keyword id="KW-0805">Transcription regulation</keyword>
<reference key="1">
    <citation type="journal article" date="2005" name="Nature">
        <title>Generation and annotation of the DNA sequences of human chromosomes 2 and 4.</title>
        <authorList>
            <person name="Hillier L.W."/>
            <person name="Graves T.A."/>
            <person name="Fulton R.S."/>
            <person name="Fulton L.A."/>
            <person name="Pepin K.H."/>
            <person name="Minx P."/>
            <person name="Wagner-McPherson C."/>
            <person name="Layman D."/>
            <person name="Wylie K."/>
            <person name="Sekhon M."/>
            <person name="Becker M.C."/>
            <person name="Fewell G.A."/>
            <person name="Delehaunty K.D."/>
            <person name="Miner T.L."/>
            <person name="Nash W.E."/>
            <person name="Kremitzki C."/>
            <person name="Oddy L."/>
            <person name="Du H."/>
            <person name="Sun H."/>
            <person name="Bradshaw-Cordum H."/>
            <person name="Ali J."/>
            <person name="Carter J."/>
            <person name="Cordes M."/>
            <person name="Harris A."/>
            <person name="Isak A."/>
            <person name="van Brunt A."/>
            <person name="Nguyen C."/>
            <person name="Du F."/>
            <person name="Courtney L."/>
            <person name="Kalicki J."/>
            <person name="Ozersky P."/>
            <person name="Abbott S."/>
            <person name="Armstrong J."/>
            <person name="Belter E.A."/>
            <person name="Caruso L."/>
            <person name="Cedroni M."/>
            <person name="Cotton M."/>
            <person name="Davidson T."/>
            <person name="Desai A."/>
            <person name="Elliott G."/>
            <person name="Erb T."/>
            <person name="Fronick C."/>
            <person name="Gaige T."/>
            <person name="Haakenson W."/>
            <person name="Haglund K."/>
            <person name="Holmes A."/>
            <person name="Harkins R."/>
            <person name="Kim K."/>
            <person name="Kruchowski S.S."/>
            <person name="Strong C.M."/>
            <person name="Grewal N."/>
            <person name="Goyea E."/>
            <person name="Hou S."/>
            <person name="Levy A."/>
            <person name="Martinka S."/>
            <person name="Mead K."/>
            <person name="McLellan M.D."/>
            <person name="Meyer R."/>
            <person name="Randall-Maher J."/>
            <person name="Tomlinson C."/>
            <person name="Dauphin-Kohlberg S."/>
            <person name="Kozlowicz-Reilly A."/>
            <person name="Shah N."/>
            <person name="Swearengen-Shahid S."/>
            <person name="Snider J."/>
            <person name="Strong J.T."/>
            <person name="Thompson J."/>
            <person name="Yoakum M."/>
            <person name="Leonard S."/>
            <person name="Pearman C."/>
            <person name="Trani L."/>
            <person name="Radionenko M."/>
            <person name="Waligorski J.E."/>
            <person name="Wang C."/>
            <person name="Rock S.M."/>
            <person name="Tin-Wollam A.-M."/>
            <person name="Maupin R."/>
            <person name="Latreille P."/>
            <person name="Wendl M.C."/>
            <person name="Yang S.-P."/>
            <person name="Pohl C."/>
            <person name="Wallis J.W."/>
            <person name="Spieth J."/>
            <person name="Bieri T.A."/>
            <person name="Berkowicz N."/>
            <person name="Nelson J.O."/>
            <person name="Osborne J."/>
            <person name="Ding L."/>
            <person name="Meyer R."/>
            <person name="Sabo A."/>
            <person name="Shotland Y."/>
            <person name="Sinha P."/>
            <person name="Wohldmann P.E."/>
            <person name="Cook L.L."/>
            <person name="Hickenbotham M.T."/>
            <person name="Eldred J."/>
            <person name="Williams D."/>
            <person name="Jones T.A."/>
            <person name="She X."/>
            <person name="Ciccarelli F.D."/>
            <person name="Izaurralde E."/>
            <person name="Taylor J."/>
            <person name="Schmutz J."/>
            <person name="Myers R.M."/>
            <person name="Cox D.R."/>
            <person name="Huang X."/>
            <person name="McPherson J.D."/>
            <person name="Mardis E.R."/>
            <person name="Clifton S.W."/>
            <person name="Warren W.C."/>
            <person name="Chinwalla A.T."/>
            <person name="Eddy S.R."/>
            <person name="Marra M.A."/>
            <person name="Ovcharenko I."/>
            <person name="Furey T.S."/>
            <person name="Miller W."/>
            <person name="Eichler E.E."/>
            <person name="Bork P."/>
            <person name="Suyama M."/>
            <person name="Torrents D."/>
            <person name="Waterston R.H."/>
            <person name="Wilson R.K."/>
        </authorList>
    </citation>
    <scope>NUCLEOTIDE SEQUENCE [LARGE SCALE GENOMIC DNA]</scope>
</reference>
<reference key="2">
    <citation type="journal article" date="2004" name="Genome Res.">
        <title>The status, quality, and expansion of the NIH full-length cDNA project: the Mammalian Gene Collection (MGC).</title>
        <authorList>
            <consortium name="The MGC Project Team"/>
        </authorList>
    </citation>
    <scope>NUCLEOTIDE SEQUENCE [LARGE SCALE MRNA] (ISOFORM 2)</scope>
    <source>
        <tissue>Urinary bladder</tissue>
    </source>
</reference>
<reference key="3">
    <citation type="submission" date="2009-06" db="UniProtKB">
        <authorList>
            <person name="Bienvenut W.V."/>
            <person name="Gao M."/>
            <person name="Leug H."/>
        </authorList>
    </citation>
    <scope>PROTEIN SEQUENCE OF 2-30; 382-392; 401-418; 425-435; 453-464; 501-512; 514-520; 575-583; 908-919; 1062-1070; 1191-1199; 1661-1668; 1752-1760; 1780-1789; 1835-1851; 2253-2279; 2713-2738; 2881-2895 AND 2979-2987</scope>
    <scope>CLEAVAGE OF INITIATOR METHIONINE</scope>
    <scope>ACETYLATION AT SER-2</scope>
    <scope>IDENTIFICATION BY MASS SPECTROMETRY</scope>
    <source>
        <tissue>Prostatic carcinoma</tissue>
    </source>
</reference>
<reference key="4">
    <citation type="submission" date="1996-11" db="EMBL/GenBank/DDBJ databases">
        <title>Identification of fifteen genes mapping to a region of chromosome 6p21.3 encompassing the microsatellite markers D6S306 and D6S1260. characterization of three genes encoding zinc finger proteins.</title>
        <authorList>
            <person name="Lee P.L."/>
            <person name="Gelbart T."/>
            <person name="West C."/>
            <person name="Adams M."/>
            <person name="Blackstone R."/>
        </authorList>
    </citation>
    <scope>NUCLEOTIDE SEQUENCE [MRNA] OF 1754-2548 (ISOFORM 1)</scope>
</reference>
<reference key="5">
    <citation type="journal article" date="1998" name="DNA Res.">
        <title>Prediction of the coding sequences of unidentified human genes. XII. The complete sequences of 100 new cDNA clones from brain which code for large proteins in vitro.</title>
        <authorList>
            <person name="Nagase T."/>
            <person name="Ishikawa K."/>
            <person name="Suyama M."/>
            <person name="Kikuno R."/>
            <person name="Hirosawa M."/>
            <person name="Miyajima N."/>
            <person name="Tanaka A."/>
            <person name="Kotani H."/>
            <person name="Nomura N."/>
            <person name="Ohara O."/>
        </authorList>
    </citation>
    <scope>NUCLEOTIDE SEQUENCE [LARGE SCALE MRNA] OF 1778-3013 (ISOFORM 1)</scope>
    <source>
        <tissue>Brain</tissue>
    </source>
</reference>
<reference key="6">
    <citation type="journal article" date="2007" name="BMC Genomics">
        <title>The full-ORF clone resource of the German cDNA consortium.</title>
        <authorList>
            <person name="Bechtel S."/>
            <person name="Rosenfelder H."/>
            <person name="Duda A."/>
            <person name="Schmidt C.P."/>
            <person name="Ernst U."/>
            <person name="Wellenreuther R."/>
            <person name="Mehrle A."/>
            <person name="Schuster C."/>
            <person name="Bahr A."/>
            <person name="Bloecker H."/>
            <person name="Heubner D."/>
            <person name="Hoerlein A."/>
            <person name="Michel G."/>
            <person name="Wedler H."/>
            <person name="Koehrer K."/>
            <person name="Ottenwaelder B."/>
            <person name="Poustka A."/>
            <person name="Wiemann S."/>
            <person name="Schupp I."/>
        </authorList>
    </citation>
    <scope>NUCLEOTIDE SEQUENCE [LARGE SCALE MRNA] OF 2853-3013 (ISOFORM 1)</scope>
    <source>
        <tissue>Testis</tissue>
    </source>
</reference>
<reference key="7">
    <citation type="journal article" date="2005" name="Cancer Res.">
        <title>AF4p12, a human homologue to the furry gene of Drosophila, as a novel MLL fusion partner.</title>
        <authorList>
            <person name="Hayette S."/>
            <person name="Cornillet-Lefebvre P."/>
            <person name="Tigaud I."/>
            <person name="Struski S."/>
            <person name="Forissier S."/>
            <person name="Berchet A."/>
            <person name="Doll D."/>
            <person name="Gillot L."/>
            <person name="Brahim W."/>
            <person name="Delabesse E."/>
            <person name="Magaud J.-P."/>
            <person name="Rimokh R."/>
        </authorList>
    </citation>
    <scope>FUNCTION</scope>
    <scope>CHROMOSOMAL TRANSLOCATION WITH KMT2A/MLL1</scope>
    <scope>TISSUE SPECIFICITY</scope>
</reference>
<reference key="8">
    <citation type="journal article" date="2006" name="Nat. Biotechnol.">
        <title>A probability-based approach for high-throughput protein phosphorylation analysis and site localization.</title>
        <authorList>
            <person name="Beausoleil S.A."/>
            <person name="Villen J."/>
            <person name="Gerber S.A."/>
            <person name="Rush J."/>
            <person name="Gygi S.P."/>
        </authorList>
    </citation>
    <scope>PHOSPHORYLATION [LARGE SCALE ANALYSIS] AT SER-2272</scope>
    <scope>IDENTIFICATION BY MASS SPECTROMETRY [LARGE SCALE ANALYSIS]</scope>
    <source>
        <tissue>Cervix carcinoma</tissue>
    </source>
</reference>
<reference key="9">
    <citation type="journal article" date="2008" name="Mol. Cell">
        <title>Kinase-selective enrichment enables quantitative phosphoproteomics of the kinome across the cell cycle.</title>
        <authorList>
            <person name="Daub H."/>
            <person name="Olsen J.V."/>
            <person name="Bairlein M."/>
            <person name="Gnad F."/>
            <person name="Oppermann F.S."/>
            <person name="Korner R."/>
            <person name="Greff Z."/>
            <person name="Keri G."/>
            <person name="Stemmann O."/>
            <person name="Mann M."/>
        </authorList>
    </citation>
    <scope>PHOSPHORYLATION [LARGE SCALE ANALYSIS] AT SER-844</scope>
    <scope>IDENTIFICATION BY MASS SPECTROMETRY [LARGE SCALE ANALYSIS]</scope>
    <source>
        <tissue>Cervix carcinoma</tissue>
    </source>
</reference>
<reference key="10">
    <citation type="journal article" date="2008" name="Proc. Natl. Acad. Sci. U.S.A.">
        <title>A quantitative atlas of mitotic phosphorylation.</title>
        <authorList>
            <person name="Dephoure N."/>
            <person name="Zhou C."/>
            <person name="Villen J."/>
            <person name="Beausoleil S.A."/>
            <person name="Bakalarski C.E."/>
            <person name="Elledge S.J."/>
            <person name="Gygi S.P."/>
        </authorList>
    </citation>
    <scope>PHOSPHORYLATION [LARGE SCALE ANALYSIS] AT SER-844; THR-1959 AND SER-2272</scope>
    <scope>IDENTIFICATION BY MASS SPECTROMETRY [LARGE SCALE ANALYSIS]</scope>
    <source>
        <tissue>Cervix carcinoma</tissue>
    </source>
</reference>
<reference key="11">
    <citation type="journal article" date="2009" name="Anal. Chem.">
        <title>Lys-N and trypsin cover complementary parts of the phosphoproteome in a refined SCX-based approach.</title>
        <authorList>
            <person name="Gauci S."/>
            <person name="Helbig A.O."/>
            <person name="Slijper M."/>
            <person name="Krijgsveld J."/>
            <person name="Heck A.J."/>
            <person name="Mohammed S."/>
        </authorList>
    </citation>
    <scope>IDENTIFICATION BY MASS SPECTROMETRY [LARGE SCALE ANALYSIS]</scope>
</reference>
<reference key="12">
    <citation type="journal article" date="2009" name="Sci. Signal.">
        <title>Quantitative phosphoproteomic analysis of T cell receptor signaling reveals system-wide modulation of protein-protein interactions.</title>
        <authorList>
            <person name="Mayya V."/>
            <person name="Lundgren D.H."/>
            <person name="Hwang S.-I."/>
            <person name="Rezaul K."/>
            <person name="Wu L."/>
            <person name="Eng J.K."/>
            <person name="Rodionov V."/>
            <person name="Han D.K."/>
        </authorList>
    </citation>
    <scope>PHOSPHORYLATION [LARGE SCALE ANALYSIS] AT SER-1914; SER-1935 AND SER-2272</scope>
    <scope>IDENTIFICATION BY MASS SPECTROMETRY [LARGE SCALE ANALYSIS]</scope>
    <source>
        <tissue>Leukemic T-cell</tissue>
    </source>
</reference>
<reference key="13">
    <citation type="journal article" date="2010" name="Sci. Signal.">
        <title>Quantitative phosphoproteomics reveals widespread full phosphorylation site occupancy during mitosis.</title>
        <authorList>
            <person name="Olsen J.V."/>
            <person name="Vermeulen M."/>
            <person name="Santamaria A."/>
            <person name="Kumar C."/>
            <person name="Miller M.L."/>
            <person name="Jensen L.J."/>
            <person name="Gnad F."/>
            <person name="Cox J."/>
            <person name="Jensen T.S."/>
            <person name="Nigg E.A."/>
            <person name="Brunak S."/>
            <person name="Mann M."/>
        </authorList>
    </citation>
    <scope>PHOSPHORYLATION [LARGE SCALE ANALYSIS] AT SER-844</scope>
    <scope>IDENTIFICATION BY MASS SPECTROMETRY [LARGE SCALE ANALYSIS]</scope>
    <source>
        <tissue>Cervix carcinoma</tissue>
    </source>
</reference>
<reference key="14">
    <citation type="journal article" date="2011" name="BMC Syst. Biol.">
        <title>Initial characterization of the human central proteome.</title>
        <authorList>
            <person name="Burkard T.R."/>
            <person name="Planyavsky M."/>
            <person name="Kaupe I."/>
            <person name="Breitwieser F.P."/>
            <person name="Buerckstuemmer T."/>
            <person name="Bennett K.L."/>
            <person name="Superti-Furga G."/>
            <person name="Colinge J."/>
        </authorList>
    </citation>
    <scope>IDENTIFICATION BY MASS SPECTROMETRY [LARGE SCALE ANALYSIS]</scope>
</reference>
<reference key="15">
    <citation type="journal article" date="2011" name="Sci. Signal.">
        <title>System-wide temporal characterization of the proteome and phosphoproteome of human embryonic stem cell differentiation.</title>
        <authorList>
            <person name="Rigbolt K.T."/>
            <person name="Prokhorova T.A."/>
            <person name="Akimov V."/>
            <person name="Henningsen J."/>
            <person name="Johansen P.T."/>
            <person name="Kratchmarova I."/>
            <person name="Kassem M."/>
            <person name="Mann M."/>
            <person name="Olsen J.V."/>
            <person name="Blagoev B."/>
        </authorList>
    </citation>
    <scope>IDENTIFICATION BY MASS SPECTROMETRY [LARGE SCALE ANALYSIS]</scope>
</reference>
<reference key="16">
    <citation type="journal article" date="2013" name="J. Proteome Res.">
        <title>Toward a comprehensive characterization of a human cancer cell phosphoproteome.</title>
        <authorList>
            <person name="Zhou H."/>
            <person name="Di Palma S."/>
            <person name="Preisinger C."/>
            <person name="Peng M."/>
            <person name="Polat A.N."/>
            <person name="Heck A.J."/>
            <person name="Mohammed S."/>
        </authorList>
    </citation>
    <scope>PHOSPHORYLATION [LARGE SCALE ANALYSIS] AT SER-844; SER-1941; SER-1945; SER-1957; THR-1959; SER-1978 AND SER-2272</scope>
    <scope>IDENTIFICATION BY MASS SPECTROMETRY [LARGE SCALE ANALYSIS]</scope>
    <source>
        <tissue>Cervix carcinoma</tissue>
        <tissue>Erythroleukemia</tissue>
    </source>
</reference>
<reference key="17">
    <citation type="journal article" date="2014" name="J. Proteomics">
        <title>An enzyme assisted RP-RPLC approach for in-depth analysis of human liver phosphoproteome.</title>
        <authorList>
            <person name="Bian Y."/>
            <person name="Song C."/>
            <person name="Cheng K."/>
            <person name="Dong M."/>
            <person name="Wang F."/>
            <person name="Huang J."/>
            <person name="Sun D."/>
            <person name="Wang L."/>
            <person name="Ye M."/>
            <person name="Zou H."/>
        </authorList>
    </citation>
    <scope>PHOSPHORYLATION [LARGE SCALE ANALYSIS] AT SER-2454 AND SER-2499</scope>
    <scope>IDENTIFICATION BY MASS SPECTROMETRY [LARGE SCALE ANALYSIS]</scope>
    <source>
        <tissue>Liver</tissue>
    </source>
</reference>
<reference key="18">
    <citation type="journal article" date="2011" name="Am. J. Hum. Genet.">
        <title>Exome sequencing and cis-regulatory mapping identify mutations in MAK, a gene encoding a regulator of ciliary length, as a cause of retinitis pigmentosa.</title>
        <authorList>
            <person name="Ozgul R.K."/>
            <person name="Siemiatkowska A.M."/>
            <person name="Yucel D."/>
            <person name="Myers C.A."/>
            <person name="Collin R.W."/>
            <person name="Zonneveld M.N."/>
            <person name="Beryozkin A."/>
            <person name="Banin E."/>
            <person name="Hoyng C.B."/>
            <person name="van den Born L.I."/>
            <person name="Bose R."/>
            <person name="Shen W."/>
            <person name="Sharon D."/>
            <person name="Cremers F.P."/>
            <person name="Klevering B.J."/>
            <person name="den Hollander A.I."/>
            <person name="Corbo J.C."/>
        </authorList>
    </citation>
    <scope>VARIANT SER-890</scope>
</reference>
<reference key="19">
    <citation type="journal article" date="2024" name="Am. J. Hum. Genet.">
        <title>De novo variants in FRYL are associated with developmental delay, intellectual disability, and dysmorphic features.</title>
        <authorList>
            <consortium name="Baylor College of Medicine Center for Precision Medicine Models"/>
            <person name="Pan X."/>
            <person name="Tao A.M."/>
            <person name="Lu S."/>
            <person name="Ma M."/>
            <person name="Hannan S.B."/>
            <person name="Slaugh R."/>
            <person name="Drewes Williams S."/>
            <person name="O'Grady L."/>
            <person name="Kanca O."/>
            <person name="Person R."/>
            <person name="Carter M.T."/>
            <person name="Platzer K."/>
            <person name="Schnabel F."/>
            <person name="Abou Jamra R."/>
            <person name="Roberts A.E."/>
            <person name="Newburger J.W."/>
            <person name="Revah-Politi A."/>
            <person name="Granadillo J.L."/>
            <person name="Stegmann A.P.A."/>
            <person name="Sinnema M."/>
            <person name="Accogli A."/>
            <person name="Salpietro V."/>
            <person name="Capra V."/>
            <person name="Ghaloul-Gonzalez L."/>
            <person name="Brueckner M."/>
            <person name="Simon M.E.H."/>
            <person name="Sweetser D.A."/>
            <person name="Glinton K.E."/>
            <person name="Kirk S.E."/>
            <person name="Wangler M.F."/>
            <person name="Yamamoto S."/>
            <person name="Chung W.K."/>
            <person name="Bellen H.J."/>
        </authorList>
    </citation>
    <scope>VARIANTS PCBS CYS-110; 1555-ARG--PHE-3013 DEL; LEU-1628; SER-2295; ILE-2397 AND CYS-2951</scope>
    <scope>INVOLVEMENT IN PCBS</scope>
</reference>
<organism>
    <name type="scientific">Homo sapiens</name>
    <name type="common">Human</name>
    <dbReference type="NCBI Taxonomy" id="9606"/>
    <lineage>
        <taxon>Eukaryota</taxon>
        <taxon>Metazoa</taxon>
        <taxon>Chordata</taxon>
        <taxon>Craniata</taxon>
        <taxon>Vertebrata</taxon>
        <taxon>Euteleostomi</taxon>
        <taxon>Mammalia</taxon>
        <taxon>Eutheria</taxon>
        <taxon>Euarchontoglires</taxon>
        <taxon>Primates</taxon>
        <taxon>Haplorrhini</taxon>
        <taxon>Catarrhini</taxon>
        <taxon>Hominidae</taxon>
        <taxon>Homo</taxon>
    </lineage>
</organism>
<accession>O94915</accession>
<accession>O95640</accession>
<accession>Q8WTZ5</accession>
<accession>Q9NT40</accession>
<proteinExistence type="evidence at protein level"/>
<dbReference type="EMBL" id="AC068037">
    <property type="status" value="NOT_ANNOTATED_CDS"/>
    <property type="molecule type" value="Genomic_DNA"/>
</dbReference>
<dbReference type="EMBL" id="AC096952">
    <property type="status" value="NOT_ANNOTATED_CDS"/>
    <property type="molecule type" value="Genomic_DNA"/>
</dbReference>
<dbReference type="EMBL" id="BC021803">
    <property type="protein sequence ID" value="AAH21803.1"/>
    <property type="molecule type" value="mRNA"/>
</dbReference>
<dbReference type="EMBL" id="U80082">
    <property type="protein sequence ID" value="AAD00351.1"/>
    <property type="molecule type" value="mRNA"/>
</dbReference>
<dbReference type="EMBL" id="AB020633">
    <property type="protein sequence ID" value="BAA74849.1"/>
    <property type="molecule type" value="mRNA"/>
</dbReference>
<dbReference type="EMBL" id="AL137546">
    <property type="protein sequence ID" value="CAB70804.1"/>
    <property type="molecule type" value="mRNA"/>
</dbReference>
<dbReference type="CCDS" id="CCDS43227.1">
    <molecule id="O94915-1"/>
</dbReference>
<dbReference type="PIR" id="T46389">
    <property type="entry name" value="T46389"/>
</dbReference>
<dbReference type="RefSeq" id="NP_055845.1">
    <molecule id="O94915-1"/>
    <property type="nucleotide sequence ID" value="NM_015030.2"/>
</dbReference>
<dbReference type="RefSeq" id="XP_016863535.1">
    <property type="nucleotide sequence ID" value="XM_017008046.1"/>
</dbReference>
<dbReference type="RefSeq" id="XP_024309761.1">
    <molecule id="O94915-1"/>
    <property type="nucleotide sequence ID" value="XM_024453993.2"/>
</dbReference>
<dbReference type="RefSeq" id="XP_054205724.1">
    <molecule id="O94915-1"/>
    <property type="nucleotide sequence ID" value="XM_054349749.1"/>
</dbReference>
<dbReference type="BioGRID" id="130134">
    <property type="interactions" value="66"/>
</dbReference>
<dbReference type="FunCoup" id="O94915">
    <property type="interactions" value="1452"/>
</dbReference>
<dbReference type="IntAct" id="O94915">
    <property type="interactions" value="48"/>
</dbReference>
<dbReference type="MINT" id="O94915"/>
<dbReference type="STRING" id="9606.ENSP00000351113"/>
<dbReference type="CarbonylDB" id="O94915"/>
<dbReference type="GlyCosmos" id="O94915">
    <property type="glycosylation" value="2 sites, 1 glycan"/>
</dbReference>
<dbReference type="GlyGen" id="O94915">
    <property type="glycosylation" value="7 sites, 1 N-linked glycan (1 site), 1 O-linked glycan (2 sites)"/>
</dbReference>
<dbReference type="iPTMnet" id="O94915"/>
<dbReference type="PhosphoSitePlus" id="O94915"/>
<dbReference type="SwissPalm" id="O94915"/>
<dbReference type="BioMuta" id="FRYL"/>
<dbReference type="jPOST" id="O94915"/>
<dbReference type="MassIVE" id="O94915"/>
<dbReference type="PaxDb" id="9606-ENSP00000351113"/>
<dbReference type="PeptideAtlas" id="O94915"/>
<dbReference type="ProteomicsDB" id="50549">
    <molecule id="O94915-1"/>
</dbReference>
<dbReference type="ProteomicsDB" id="50550">
    <molecule id="O94915-2"/>
</dbReference>
<dbReference type="Pumba" id="O94915"/>
<dbReference type="Antibodypedia" id="23821">
    <property type="antibodies" value="32 antibodies from 10 providers"/>
</dbReference>
<dbReference type="DNASU" id="285527"/>
<dbReference type="Ensembl" id="ENST00000358350.9">
    <molecule id="O94915-1"/>
    <property type="protein sequence ID" value="ENSP00000351113.4"/>
    <property type="gene ID" value="ENSG00000075539.15"/>
</dbReference>
<dbReference type="GeneID" id="285527"/>
<dbReference type="KEGG" id="hsa:285527"/>
<dbReference type="MANE-Select" id="ENST00000358350.9">
    <property type="protein sequence ID" value="ENSP00000351113.4"/>
    <property type="RefSeq nucleotide sequence ID" value="NM_015030.2"/>
    <property type="RefSeq protein sequence ID" value="NP_055845.1"/>
</dbReference>
<dbReference type="UCSC" id="uc003gyh.1">
    <molecule id="O94915-1"/>
    <property type="organism name" value="human"/>
</dbReference>
<dbReference type="AGR" id="HGNC:29127"/>
<dbReference type="CTD" id="285527"/>
<dbReference type="DisGeNET" id="285527"/>
<dbReference type="GeneCards" id="FRYL"/>
<dbReference type="HGNC" id="HGNC:29127">
    <property type="gene designation" value="FRYL"/>
</dbReference>
<dbReference type="HPA" id="ENSG00000075539">
    <property type="expression patterns" value="Tissue enhanced (intestine)"/>
</dbReference>
<dbReference type="MIM" id="620798">
    <property type="type" value="gene"/>
</dbReference>
<dbReference type="MIM" id="621049">
    <property type="type" value="phenotype"/>
</dbReference>
<dbReference type="neXtProt" id="NX_O94915"/>
<dbReference type="OpenTargets" id="ENSG00000075539"/>
<dbReference type="PharmGKB" id="PA134967984"/>
<dbReference type="VEuPathDB" id="HostDB:ENSG00000075539"/>
<dbReference type="eggNOG" id="KOG1825">
    <property type="taxonomic scope" value="Eukaryota"/>
</dbReference>
<dbReference type="GeneTree" id="ENSGT00610000086058"/>
<dbReference type="HOGENOM" id="CLU_000483_0_0_1"/>
<dbReference type="InParanoid" id="O94915"/>
<dbReference type="OMA" id="MRADTMK"/>
<dbReference type="OrthoDB" id="6287725at2759"/>
<dbReference type="PAN-GO" id="O94915">
    <property type="GO annotations" value="4 GO annotations based on evolutionary models"/>
</dbReference>
<dbReference type="PhylomeDB" id="O94915"/>
<dbReference type="TreeFam" id="TF313568"/>
<dbReference type="PathwayCommons" id="O94915"/>
<dbReference type="SignaLink" id="O94915"/>
<dbReference type="BioGRID-ORCS" id="285527">
    <property type="hits" value="49 hits in 1175 CRISPR screens"/>
</dbReference>
<dbReference type="CD-CODE" id="FB4E32DD">
    <property type="entry name" value="Presynaptic clusters and postsynaptic densities"/>
</dbReference>
<dbReference type="ChiTaRS" id="FRYL">
    <property type="organism name" value="human"/>
</dbReference>
<dbReference type="GenomeRNAi" id="285527"/>
<dbReference type="Pharos" id="O94915">
    <property type="development level" value="Tdark"/>
</dbReference>
<dbReference type="PRO" id="PR:O94915"/>
<dbReference type="Proteomes" id="UP000005640">
    <property type="component" value="Chromosome 4"/>
</dbReference>
<dbReference type="RNAct" id="O94915">
    <property type="molecule type" value="protein"/>
</dbReference>
<dbReference type="Bgee" id="ENSG00000075539">
    <property type="expression patterns" value="Expressed in corpus callosum and 207 other cell types or tissues"/>
</dbReference>
<dbReference type="ExpressionAtlas" id="O94915">
    <property type="expression patterns" value="baseline and differential"/>
</dbReference>
<dbReference type="GO" id="GO:0005938">
    <property type="term" value="C:cell cortex"/>
    <property type="evidence" value="ECO:0000318"/>
    <property type="project" value="GO_Central"/>
</dbReference>
<dbReference type="GO" id="GO:0030427">
    <property type="term" value="C:site of polarized growth"/>
    <property type="evidence" value="ECO:0000318"/>
    <property type="project" value="GO_Central"/>
</dbReference>
<dbReference type="GO" id="GO:0000902">
    <property type="term" value="P:cell morphogenesis"/>
    <property type="evidence" value="ECO:0000318"/>
    <property type="project" value="GO_Central"/>
</dbReference>
<dbReference type="GO" id="GO:0031175">
    <property type="term" value="P:neuron projection development"/>
    <property type="evidence" value="ECO:0000318"/>
    <property type="project" value="GO_Central"/>
</dbReference>
<dbReference type="InterPro" id="IPR016024">
    <property type="entry name" value="ARM-type_fold"/>
</dbReference>
<dbReference type="InterPro" id="IPR025614">
    <property type="entry name" value="Cell_morpho_N"/>
</dbReference>
<dbReference type="InterPro" id="IPR025481">
    <property type="entry name" value="Cell_Morphogen_C"/>
</dbReference>
<dbReference type="InterPro" id="IPR045842">
    <property type="entry name" value="Fry_C"/>
</dbReference>
<dbReference type="InterPro" id="IPR039867">
    <property type="entry name" value="Furry/Tao3/Mor2"/>
</dbReference>
<dbReference type="InterPro" id="IPR029473">
    <property type="entry name" value="MOR2-PAG1_mid"/>
</dbReference>
<dbReference type="PANTHER" id="PTHR12295">
    <property type="entry name" value="FURRY-RELATED"/>
    <property type="match status" value="1"/>
</dbReference>
<dbReference type="PANTHER" id="PTHR12295:SF9">
    <property type="entry name" value="PROTEIN FURRY HOMOLOG-LIKE"/>
    <property type="match status" value="1"/>
</dbReference>
<dbReference type="Pfam" id="PF19421">
    <property type="entry name" value="Fry_C"/>
    <property type="match status" value="1"/>
</dbReference>
<dbReference type="Pfam" id="PF14225">
    <property type="entry name" value="MOR2-PAG1_C"/>
    <property type="match status" value="1"/>
</dbReference>
<dbReference type="Pfam" id="PF14228">
    <property type="entry name" value="MOR2-PAG1_mid"/>
    <property type="match status" value="4"/>
</dbReference>
<dbReference type="Pfam" id="PF14222">
    <property type="entry name" value="MOR2-PAG1_N"/>
    <property type="match status" value="1"/>
</dbReference>
<dbReference type="SUPFAM" id="SSF48371">
    <property type="entry name" value="ARM repeat"/>
    <property type="match status" value="2"/>
</dbReference>
<protein>
    <recommendedName>
        <fullName>Protein furry homolog-like</fullName>
    </recommendedName>
    <alternativeName>
        <fullName>ALL1-fused gene from chromosome 4p12 protein</fullName>
    </alternativeName>
</protein>
<evidence type="ECO:0000250" key="1"/>
<evidence type="ECO:0000256" key="2">
    <source>
        <dbReference type="SAM" id="MobiDB-lite"/>
    </source>
</evidence>
<evidence type="ECO:0000269" key="3">
    <source>
    </source>
</evidence>
<evidence type="ECO:0000269" key="4">
    <source>
    </source>
</evidence>
<evidence type="ECO:0000269" key="5">
    <source>
    </source>
</evidence>
<evidence type="ECO:0000269" key="6">
    <source ref="3"/>
</evidence>
<evidence type="ECO:0000303" key="7">
    <source>
    </source>
</evidence>
<evidence type="ECO:0000305" key="8"/>
<evidence type="ECO:0007744" key="9">
    <source>
    </source>
</evidence>
<evidence type="ECO:0007744" key="10">
    <source>
    </source>
</evidence>
<evidence type="ECO:0007744" key="11">
    <source>
    </source>
</evidence>
<evidence type="ECO:0007744" key="12">
    <source>
    </source>
</evidence>
<evidence type="ECO:0007744" key="13">
    <source>
    </source>
</evidence>
<evidence type="ECO:0007744" key="14">
    <source>
    </source>
</evidence>
<evidence type="ECO:0007744" key="15">
    <source>
    </source>
</evidence>